<organism>
    <name type="scientific">Pelargonium hortorum</name>
    <name type="common">Common geranium</name>
    <name type="synonym">Pelargonium inquinans x Pelargonium zonale</name>
    <dbReference type="NCBI Taxonomy" id="4031"/>
    <lineage>
        <taxon>Eukaryota</taxon>
        <taxon>Viridiplantae</taxon>
        <taxon>Streptophyta</taxon>
        <taxon>Embryophyta</taxon>
        <taxon>Tracheophyta</taxon>
        <taxon>Spermatophyta</taxon>
        <taxon>Magnoliopsida</taxon>
        <taxon>eudicotyledons</taxon>
        <taxon>Gunneridae</taxon>
        <taxon>Pentapetalae</taxon>
        <taxon>rosids</taxon>
        <taxon>malvids</taxon>
        <taxon>Geraniales</taxon>
        <taxon>Geraniaceae</taxon>
        <taxon>Pelargonium</taxon>
    </lineage>
</organism>
<comment type="function">
    <text evidence="1">Produces ATP from ADP in the presence of a proton gradient across the membrane. The catalytic sites are hosted primarily by the beta subunits.</text>
</comment>
<comment type="catalytic activity">
    <reaction evidence="1">
        <text>ATP + H2O + 4 H(+)(in) = ADP + phosphate + 5 H(+)(out)</text>
        <dbReference type="Rhea" id="RHEA:57720"/>
        <dbReference type="ChEBI" id="CHEBI:15377"/>
        <dbReference type="ChEBI" id="CHEBI:15378"/>
        <dbReference type="ChEBI" id="CHEBI:30616"/>
        <dbReference type="ChEBI" id="CHEBI:43474"/>
        <dbReference type="ChEBI" id="CHEBI:456216"/>
        <dbReference type="EC" id="7.1.2.2"/>
    </reaction>
</comment>
<comment type="subunit">
    <text evidence="1">F-type ATPases have 2 components, CF(1) - the catalytic core - and CF(0) - the membrane proton channel. CF(1) has five subunits: alpha(3), beta(3), gamma(1), delta(1), epsilon(1). CF(0) has four main subunits: a(1), b(1), b'(1) and c(9-12).</text>
</comment>
<comment type="subcellular location">
    <subcellularLocation>
        <location evidence="1">Plastid</location>
        <location evidence="1">Chloroplast thylakoid membrane</location>
        <topology evidence="1">Peripheral membrane protein</topology>
    </subcellularLocation>
</comment>
<comment type="similarity">
    <text evidence="1">Belongs to the ATPase alpha/beta chains family.</text>
</comment>
<gene>
    <name evidence="1" type="primary">atpB</name>
</gene>
<feature type="chain" id="PRO_0000275185" description="ATP synthase subunit beta, chloroplastic">
    <location>
        <begin position="1"/>
        <end position="498"/>
    </location>
</feature>
<feature type="binding site" evidence="1">
    <location>
        <begin position="172"/>
        <end position="179"/>
    </location>
    <ligand>
        <name>ATP</name>
        <dbReference type="ChEBI" id="CHEBI:30616"/>
    </ligand>
</feature>
<accession>Q06FV3</accession>
<dbReference type="EC" id="7.1.2.2" evidence="1"/>
<dbReference type="EMBL" id="DQ897681">
    <property type="protein sequence ID" value="ABI17269.1"/>
    <property type="molecule type" value="Genomic_DNA"/>
</dbReference>
<dbReference type="RefSeq" id="YP_784078.1">
    <property type="nucleotide sequence ID" value="NC_008454.1"/>
</dbReference>
<dbReference type="SMR" id="Q06FV3"/>
<dbReference type="GeneID" id="4362899"/>
<dbReference type="GO" id="GO:0009535">
    <property type="term" value="C:chloroplast thylakoid membrane"/>
    <property type="evidence" value="ECO:0007669"/>
    <property type="project" value="UniProtKB-SubCell"/>
</dbReference>
<dbReference type="GO" id="GO:0005739">
    <property type="term" value="C:mitochondrion"/>
    <property type="evidence" value="ECO:0007669"/>
    <property type="project" value="GOC"/>
</dbReference>
<dbReference type="GO" id="GO:0045259">
    <property type="term" value="C:proton-transporting ATP synthase complex"/>
    <property type="evidence" value="ECO:0007669"/>
    <property type="project" value="UniProtKB-KW"/>
</dbReference>
<dbReference type="GO" id="GO:0005524">
    <property type="term" value="F:ATP binding"/>
    <property type="evidence" value="ECO:0007669"/>
    <property type="project" value="UniProtKB-UniRule"/>
</dbReference>
<dbReference type="GO" id="GO:0016887">
    <property type="term" value="F:ATP hydrolysis activity"/>
    <property type="evidence" value="ECO:0007669"/>
    <property type="project" value="InterPro"/>
</dbReference>
<dbReference type="GO" id="GO:0046933">
    <property type="term" value="F:proton-transporting ATP synthase activity, rotational mechanism"/>
    <property type="evidence" value="ECO:0007669"/>
    <property type="project" value="UniProtKB-UniRule"/>
</dbReference>
<dbReference type="GO" id="GO:0042776">
    <property type="term" value="P:proton motive force-driven mitochondrial ATP synthesis"/>
    <property type="evidence" value="ECO:0007669"/>
    <property type="project" value="TreeGrafter"/>
</dbReference>
<dbReference type="CDD" id="cd18110">
    <property type="entry name" value="ATP-synt_F1_beta_C"/>
    <property type="match status" value="1"/>
</dbReference>
<dbReference type="CDD" id="cd18115">
    <property type="entry name" value="ATP-synt_F1_beta_N"/>
    <property type="match status" value="1"/>
</dbReference>
<dbReference type="CDD" id="cd01133">
    <property type="entry name" value="F1-ATPase_beta_CD"/>
    <property type="match status" value="1"/>
</dbReference>
<dbReference type="FunFam" id="1.10.1140.10:FF:000001">
    <property type="entry name" value="ATP synthase subunit beta"/>
    <property type="match status" value="1"/>
</dbReference>
<dbReference type="FunFam" id="3.40.50.300:FF:000026">
    <property type="entry name" value="ATP synthase subunit beta"/>
    <property type="match status" value="1"/>
</dbReference>
<dbReference type="FunFam" id="2.40.10.170:FF:000002">
    <property type="entry name" value="ATP synthase subunit beta, chloroplastic"/>
    <property type="match status" value="1"/>
</dbReference>
<dbReference type="Gene3D" id="2.40.10.170">
    <property type="match status" value="1"/>
</dbReference>
<dbReference type="Gene3D" id="1.10.1140.10">
    <property type="entry name" value="Bovine Mitochondrial F1-atpase, Atp Synthase Beta Chain, Chain D, domain 3"/>
    <property type="match status" value="1"/>
</dbReference>
<dbReference type="Gene3D" id="3.40.50.300">
    <property type="entry name" value="P-loop containing nucleotide triphosphate hydrolases"/>
    <property type="match status" value="1"/>
</dbReference>
<dbReference type="HAMAP" id="MF_01347">
    <property type="entry name" value="ATP_synth_beta_bact"/>
    <property type="match status" value="1"/>
</dbReference>
<dbReference type="InterPro" id="IPR003593">
    <property type="entry name" value="AAA+_ATPase"/>
</dbReference>
<dbReference type="InterPro" id="IPR055190">
    <property type="entry name" value="ATP-synt_VA_C"/>
</dbReference>
<dbReference type="InterPro" id="IPR005722">
    <property type="entry name" value="ATP_synth_F1_bsu"/>
</dbReference>
<dbReference type="InterPro" id="IPR020003">
    <property type="entry name" value="ATPase_a/bsu_AS"/>
</dbReference>
<dbReference type="InterPro" id="IPR050053">
    <property type="entry name" value="ATPase_alpha/beta_chains"/>
</dbReference>
<dbReference type="InterPro" id="IPR004100">
    <property type="entry name" value="ATPase_F1/V1/A1_a/bsu_N"/>
</dbReference>
<dbReference type="InterPro" id="IPR036121">
    <property type="entry name" value="ATPase_F1/V1/A1_a/bsu_N_sf"/>
</dbReference>
<dbReference type="InterPro" id="IPR000194">
    <property type="entry name" value="ATPase_F1/V1/A1_a/bsu_nucl-bd"/>
</dbReference>
<dbReference type="InterPro" id="IPR024034">
    <property type="entry name" value="ATPase_F1/V1_b/a_C"/>
</dbReference>
<dbReference type="InterPro" id="IPR027417">
    <property type="entry name" value="P-loop_NTPase"/>
</dbReference>
<dbReference type="NCBIfam" id="TIGR01039">
    <property type="entry name" value="atpD"/>
    <property type="match status" value="1"/>
</dbReference>
<dbReference type="PANTHER" id="PTHR15184">
    <property type="entry name" value="ATP SYNTHASE"/>
    <property type="match status" value="1"/>
</dbReference>
<dbReference type="PANTHER" id="PTHR15184:SF71">
    <property type="entry name" value="ATP SYNTHASE SUBUNIT BETA, MITOCHONDRIAL"/>
    <property type="match status" value="1"/>
</dbReference>
<dbReference type="Pfam" id="PF00006">
    <property type="entry name" value="ATP-synt_ab"/>
    <property type="match status" value="1"/>
</dbReference>
<dbReference type="Pfam" id="PF02874">
    <property type="entry name" value="ATP-synt_ab_N"/>
    <property type="match status" value="1"/>
</dbReference>
<dbReference type="Pfam" id="PF22919">
    <property type="entry name" value="ATP-synt_VA_C"/>
    <property type="match status" value="1"/>
</dbReference>
<dbReference type="SMART" id="SM00382">
    <property type="entry name" value="AAA"/>
    <property type="match status" value="1"/>
</dbReference>
<dbReference type="SUPFAM" id="SSF47917">
    <property type="entry name" value="C-terminal domain of alpha and beta subunits of F1 ATP synthase"/>
    <property type="match status" value="1"/>
</dbReference>
<dbReference type="SUPFAM" id="SSF50615">
    <property type="entry name" value="N-terminal domain of alpha and beta subunits of F1 ATP synthase"/>
    <property type="match status" value="1"/>
</dbReference>
<dbReference type="SUPFAM" id="SSF52540">
    <property type="entry name" value="P-loop containing nucleoside triphosphate hydrolases"/>
    <property type="match status" value="1"/>
</dbReference>
<dbReference type="PROSITE" id="PS00152">
    <property type="entry name" value="ATPASE_ALPHA_BETA"/>
    <property type="match status" value="1"/>
</dbReference>
<protein>
    <recommendedName>
        <fullName evidence="1">ATP synthase subunit beta, chloroplastic</fullName>
        <ecNumber evidence="1">7.1.2.2</ecNumber>
    </recommendedName>
    <alternativeName>
        <fullName evidence="1">ATP synthase F1 sector subunit beta</fullName>
    </alternativeName>
    <alternativeName>
        <fullName evidence="1">F-ATPase subunit beta</fullName>
    </alternativeName>
</protein>
<reference key="1">
    <citation type="journal article" date="2006" name="Mol. Biol. Evol.">
        <title>The complete chloroplast genome sequence of Pelargonium x hortorum: organization and evolution of the largest and most highly rearranged chloroplast genome of land plants.</title>
        <authorList>
            <person name="Chumley T.W."/>
            <person name="Palmer J.D."/>
            <person name="Mower J.P."/>
            <person name="Fourcade H.M."/>
            <person name="Calie P.J."/>
            <person name="Boore J.L."/>
            <person name="Jansen R.K."/>
        </authorList>
    </citation>
    <scope>NUCLEOTIDE SEQUENCE [LARGE SCALE GENOMIC DNA]</scope>
    <source>
        <strain>cv. Ringo White</strain>
    </source>
</reference>
<name>ATPB_PELHO</name>
<keyword id="KW-0066">ATP synthesis</keyword>
<keyword id="KW-0067">ATP-binding</keyword>
<keyword id="KW-0139">CF(1)</keyword>
<keyword id="KW-0150">Chloroplast</keyword>
<keyword id="KW-0375">Hydrogen ion transport</keyword>
<keyword id="KW-0406">Ion transport</keyword>
<keyword id="KW-0472">Membrane</keyword>
<keyword id="KW-0547">Nucleotide-binding</keyword>
<keyword id="KW-0934">Plastid</keyword>
<keyword id="KW-0793">Thylakoid</keyword>
<keyword id="KW-1278">Translocase</keyword>
<keyword id="KW-0813">Transport</keyword>
<geneLocation type="chloroplast"/>
<evidence type="ECO:0000255" key="1">
    <source>
        <dbReference type="HAMAP-Rule" id="MF_01347"/>
    </source>
</evidence>
<sequence>MRLNPTASSPGDSTLQKKKLGRIVQIIGPVLDVAFPRGKMPYIYNALVVQGRDTVGQQIHVTCEVQQLLGNNRVRAVAMSATDGLMRGMEVIDTGAPLSVPVGGATLGRIFNVLGEPVDNLGPVDNRTTSPIHKSPPAFIELDTKLSIFETGIKVVDLLAPYRRGGKIGLFGGAGVGKTVLIMELINNIAKAHGGVSVFGGVGERTREGNDLYMEMKESGVINEQKVAESKVALVYGQMNEPPGARMRVGLTALTMAEYFRDVNKQDVLLFIDNIFRFVQAGSEVSALLGRMPSAVGYQPTLSTEMGSLQERITSTKKGSITSIQAVYVPADDLTDPAPATTFAHLDATTVLSRGLAAKGIYPAVDPLDSTSTMLQPRIVGNEHYEIAQRVKQTLQRYKELQDIIAILGLDELSEEDRLTVARARKIERFLSQPFFVAEVFTGSTGKYVGLSETIRGFHLILSGEFDGLPEQAFYLVGNIDEATAKAMKLEKESNLKK</sequence>
<proteinExistence type="inferred from homology"/>